<protein>
    <recommendedName>
        <fullName evidence="1">Indole-3-glycerol phosphate synthase</fullName>
        <shortName evidence="1">IGPS</shortName>
        <ecNumber evidence="1">4.1.1.48</ecNumber>
    </recommendedName>
</protein>
<gene>
    <name evidence="1" type="primary">trpC</name>
    <name type="ordered locus">SGO_0660</name>
</gene>
<evidence type="ECO:0000255" key="1">
    <source>
        <dbReference type="HAMAP-Rule" id="MF_00134"/>
    </source>
</evidence>
<organism>
    <name type="scientific">Streptococcus gordonii (strain Challis / ATCC 35105 / BCRC 15272 / CH1 / DL1 / V288)</name>
    <dbReference type="NCBI Taxonomy" id="467705"/>
    <lineage>
        <taxon>Bacteria</taxon>
        <taxon>Bacillati</taxon>
        <taxon>Bacillota</taxon>
        <taxon>Bacilli</taxon>
        <taxon>Lactobacillales</taxon>
        <taxon>Streptococcaceae</taxon>
        <taxon>Streptococcus</taxon>
    </lineage>
</organism>
<proteinExistence type="inferred from homology"/>
<dbReference type="EC" id="4.1.1.48" evidence="1"/>
<dbReference type="EMBL" id="CP000725">
    <property type="protein sequence ID" value="ABV10029.1"/>
    <property type="molecule type" value="Genomic_DNA"/>
</dbReference>
<dbReference type="RefSeq" id="WP_012000137.1">
    <property type="nucleotide sequence ID" value="NC_009785.1"/>
</dbReference>
<dbReference type="SMR" id="A8AW03"/>
<dbReference type="STRING" id="467705.SGO_0660"/>
<dbReference type="KEGG" id="sgo:SGO_0660"/>
<dbReference type="eggNOG" id="COG0134">
    <property type="taxonomic scope" value="Bacteria"/>
</dbReference>
<dbReference type="HOGENOM" id="CLU_034247_2_1_9"/>
<dbReference type="UniPathway" id="UPA00035">
    <property type="reaction ID" value="UER00043"/>
</dbReference>
<dbReference type="Proteomes" id="UP000001131">
    <property type="component" value="Chromosome"/>
</dbReference>
<dbReference type="GO" id="GO:0004425">
    <property type="term" value="F:indole-3-glycerol-phosphate synthase activity"/>
    <property type="evidence" value="ECO:0007669"/>
    <property type="project" value="UniProtKB-UniRule"/>
</dbReference>
<dbReference type="GO" id="GO:0004640">
    <property type="term" value="F:phosphoribosylanthranilate isomerase activity"/>
    <property type="evidence" value="ECO:0007669"/>
    <property type="project" value="TreeGrafter"/>
</dbReference>
<dbReference type="GO" id="GO:0000162">
    <property type="term" value="P:L-tryptophan biosynthetic process"/>
    <property type="evidence" value="ECO:0007669"/>
    <property type="project" value="UniProtKB-UniRule"/>
</dbReference>
<dbReference type="CDD" id="cd00331">
    <property type="entry name" value="IGPS"/>
    <property type="match status" value="1"/>
</dbReference>
<dbReference type="FunFam" id="3.20.20.70:FF:000024">
    <property type="entry name" value="Indole-3-glycerol phosphate synthase"/>
    <property type="match status" value="1"/>
</dbReference>
<dbReference type="Gene3D" id="3.20.20.70">
    <property type="entry name" value="Aldolase class I"/>
    <property type="match status" value="1"/>
</dbReference>
<dbReference type="HAMAP" id="MF_00134_B">
    <property type="entry name" value="IGPS_B"/>
    <property type="match status" value="1"/>
</dbReference>
<dbReference type="InterPro" id="IPR013785">
    <property type="entry name" value="Aldolase_TIM"/>
</dbReference>
<dbReference type="InterPro" id="IPR045186">
    <property type="entry name" value="Indole-3-glycerol_P_synth"/>
</dbReference>
<dbReference type="InterPro" id="IPR013798">
    <property type="entry name" value="Indole-3-glycerol_P_synth_dom"/>
</dbReference>
<dbReference type="InterPro" id="IPR001468">
    <property type="entry name" value="Indole-3-GlycerolPSynthase_CS"/>
</dbReference>
<dbReference type="InterPro" id="IPR011060">
    <property type="entry name" value="RibuloseP-bd_barrel"/>
</dbReference>
<dbReference type="NCBIfam" id="NF001371">
    <property type="entry name" value="PRK00278.1-3"/>
    <property type="match status" value="1"/>
</dbReference>
<dbReference type="NCBIfam" id="NF001377">
    <property type="entry name" value="PRK00278.2-4"/>
    <property type="match status" value="1"/>
</dbReference>
<dbReference type="PANTHER" id="PTHR22854:SF2">
    <property type="entry name" value="INDOLE-3-GLYCEROL-PHOSPHATE SYNTHASE"/>
    <property type="match status" value="1"/>
</dbReference>
<dbReference type="PANTHER" id="PTHR22854">
    <property type="entry name" value="TRYPTOPHAN BIOSYNTHESIS PROTEIN"/>
    <property type="match status" value="1"/>
</dbReference>
<dbReference type="Pfam" id="PF00218">
    <property type="entry name" value="IGPS"/>
    <property type="match status" value="1"/>
</dbReference>
<dbReference type="SUPFAM" id="SSF51366">
    <property type="entry name" value="Ribulose-phoshate binding barrel"/>
    <property type="match status" value="1"/>
</dbReference>
<dbReference type="PROSITE" id="PS00614">
    <property type="entry name" value="IGPS"/>
    <property type="match status" value="1"/>
</dbReference>
<comment type="catalytic activity">
    <reaction evidence="1">
        <text>1-(2-carboxyphenylamino)-1-deoxy-D-ribulose 5-phosphate + H(+) = (1S,2R)-1-C-(indol-3-yl)glycerol 3-phosphate + CO2 + H2O</text>
        <dbReference type="Rhea" id="RHEA:23476"/>
        <dbReference type="ChEBI" id="CHEBI:15377"/>
        <dbReference type="ChEBI" id="CHEBI:15378"/>
        <dbReference type="ChEBI" id="CHEBI:16526"/>
        <dbReference type="ChEBI" id="CHEBI:58613"/>
        <dbReference type="ChEBI" id="CHEBI:58866"/>
        <dbReference type="EC" id="4.1.1.48"/>
    </reaction>
</comment>
<comment type="pathway">
    <text evidence="1">Amino-acid biosynthesis; L-tryptophan biosynthesis; L-tryptophan from chorismate: step 4/5.</text>
</comment>
<comment type="similarity">
    <text evidence="1">Belongs to the TrpC family.</text>
</comment>
<name>TRPC_STRGC</name>
<keyword id="KW-0028">Amino-acid biosynthesis</keyword>
<keyword id="KW-0057">Aromatic amino acid biosynthesis</keyword>
<keyword id="KW-0210">Decarboxylase</keyword>
<keyword id="KW-0456">Lyase</keyword>
<keyword id="KW-1185">Reference proteome</keyword>
<keyword id="KW-0822">Tryptophan biosynthesis</keyword>
<reference key="1">
    <citation type="journal article" date="2007" name="J. Bacteriol.">
        <title>Genome-wide transcriptional changes in Streptococcus gordonii in response to competence signaling peptide.</title>
        <authorList>
            <person name="Vickerman M.M."/>
            <person name="Iobst S."/>
            <person name="Jesionowski A.M."/>
            <person name="Gill S.R."/>
        </authorList>
    </citation>
    <scope>NUCLEOTIDE SEQUENCE [LARGE SCALE GENOMIC DNA]</scope>
    <source>
        <strain>Challis / ATCC 35105 / BCRC 15272 / CH1 / DL1 / V288</strain>
    </source>
</reference>
<sequence>MSKEFLPTILEQKEQEVEAMSYEELQPLRSTYSLYEYLKSQSQELQLIAEVKKASPSLGDINLAVDIVEQARTYERCGAAMISVLTDEIFFKGHLDYLREISSQVSIPTLNKDFIIDEKQIVRARNAGATIILLIVAALSEKRLQELYDFATGLGLEVLVETHNLAELETAHRIGARIIGVNNRNLVTFETDINTSLQLSAHFKDDRVYVSESAIFSKEDAEQVAPYFHAILVGTALMQAEDVAEKIKELKIDKG</sequence>
<accession>A8AW03</accession>
<feature type="chain" id="PRO_1000076427" description="Indole-3-glycerol phosphate synthase">
    <location>
        <begin position="1"/>
        <end position="255"/>
    </location>
</feature>